<organism>
    <name type="scientific">Azoarcus sp. (strain BH72)</name>
    <dbReference type="NCBI Taxonomy" id="418699"/>
    <lineage>
        <taxon>Bacteria</taxon>
        <taxon>Pseudomonadati</taxon>
        <taxon>Pseudomonadota</taxon>
        <taxon>Betaproteobacteria</taxon>
        <taxon>Rhodocyclales</taxon>
        <taxon>Zoogloeaceae</taxon>
        <taxon>Azoarcus</taxon>
    </lineage>
</organism>
<keyword id="KW-0963">Cytoplasm</keyword>
<keyword id="KW-0342">GTP-binding</keyword>
<keyword id="KW-0378">Hydrolase</keyword>
<keyword id="KW-0460">Magnesium</keyword>
<keyword id="KW-0479">Metal-binding</keyword>
<keyword id="KW-0547">Nucleotide-binding</keyword>
<keyword id="KW-1185">Reference proteome</keyword>
<feature type="chain" id="PRO_0000385708" description="GTPase Obg">
    <location>
        <begin position="1"/>
        <end position="408"/>
    </location>
</feature>
<feature type="domain" description="Obg" evidence="2">
    <location>
        <begin position="1"/>
        <end position="159"/>
    </location>
</feature>
<feature type="domain" description="OBG-type G" evidence="1">
    <location>
        <begin position="160"/>
        <end position="334"/>
    </location>
</feature>
<feature type="region of interest" description="Disordered" evidence="3">
    <location>
        <begin position="385"/>
        <end position="408"/>
    </location>
</feature>
<feature type="binding site" evidence="1">
    <location>
        <begin position="166"/>
        <end position="173"/>
    </location>
    <ligand>
        <name>GTP</name>
        <dbReference type="ChEBI" id="CHEBI:37565"/>
    </ligand>
</feature>
<feature type="binding site" evidence="1">
    <location>
        <position position="173"/>
    </location>
    <ligand>
        <name>Mg(2+)</name>
        <dbReference type="ChEBI" id="CHEBI:18420"/>
    </ligand>
</feature>
<feature type="binding site" evidence="1">
    <location>
        <begin position="191"/>
        <end position="195"/>
    </location>
    <ligand>
        <name>GTP</name>
        <dbReference type="ChEBI" id="CHEBI:37565"/>
    </ligand>
</feature>
<feature type="binding site" evidence="1">
    <location>
        <position position="193"/>
    </location>
    <ligand>
        <name>Mg(2+)</name>
        <dbReference type="ChEBI" id="CHEBI:18420"/>
    </ligand>
</feature>
<feature type="binding site" evidence="1">
    <location>
        <begin position="213"/>
        <end position="216"/>
    </location>
    <ligand>
        <name>GTP</name>
        <dbReference type="ChEBI" id="CHEBI:37565"/>
    </ligand>
</feature>
<feature type="binding site" evidence="1">
    <location>
        <begin position="284"/>
        <end position="287"/>
    </location>
    <ligand>
        <name>GTP</name>
        <dbReference type="ChEBI" id="CHEBI:37565"/>
    </ligand>
</feature>
<feature type="binding site" evidence="1">
    <location>
        <begin position="315"/>
        <end position="317"/>
    </location>
    <ligand>
        <name>GTP</name>
        <dbReference type="ChEBI" id="CHEBI:37565"/>
    </ligand>
</feature>
<sequence>MKFFDEARIEVVAGDGGNGAATFRREKFIPRGGPDGGDGGRGGSVYAVADRNLNTLVEYRFKRSFRAERGENGGSKDCYGKGGEDITLHFPVGTVISDLDSGEPIADLDVDGKRVLLAQGGRGGLGNLHFKSSVNRAPRKRTMGQEGERRNLHLELKVLADVGLLGMPNAGKSTFIRAVSAARPKVGDYPFTTLQPNLGVVRTDENRSFVIADIPGLIEGAAEGAGLGHQFLRHLQRTHVLLHLVDLAPFDPEVDPVRDALAIVEELRKYDESLYNKPRWLVLNKLDLLEPEDRAPRVAAFLEAYGEVERHFEISALQGEGCRGLIFALQDFLDSERANIHAQQAAREAEERQRLAAAQSARSAAEAEALEADLAEDALAEDALAEDALAEDALDDDADGEDADPNAR</sequence>
<evidence type="ECO:0000255" key="1">
    <source>
        <dbReference type="HAMAP-Rule" id="MF_01454"/>
    </source>
</evidence>
<evidence type="ECO:0000255" key="2">
    <source>
        <dbReference type="PROSITE-ProRule" id="PRU01231"/>
    </source>
</evidence>
<evidence type="ECO:0000256" key="3">
    <source>
        <dbReference type="SAM" id="MobiDB-lite"/>
    </source>
</evidence>
<dbReference type="EC" id="3.6.5.-" evidence="1"/>
<dbReference type="EMBL" id="AM406670">
    <property type="protein sequence ID" value="CAL95786.1"/>
    <property type="molecule type" value="Genomic_DNA"/>
</dbReference>
<dbReference type="RefSeq" id="WP_011766894.1">
    <property type="nucleotide sequence ID" value="NC_008702.1"/>
</dbReference>
<dbReference type="SMR" id="A1KAD0"/>
<dbReference type="STRING" id="62928.azo3169"/>
<dbReference type="KEGG" id="azo:azo3169"/>
<dbReference type="eggNOG" id="COG0536">
    <property type="taxonomic scope" value="Bacteria"/>
</dbReference>
<dbReference type="HOGENOM" id="CLU_011747_2_0_4"/>
<dbReference type="Proteomes" id="UP000002588">
    <property type="component" value="Chromosome"/>
</dbReference>
<dbReference type="GO" id="GO:0005737">
    <property type="term" value="C:cytoplasm"/>
    <property type="evidence" value="ECO:0007669"/>
    <property type="project" value="UniProtKB-SubCell"/>
</dbReference>
<dbReference type="GO" id="GO:0005525">
    <property type="term" value="F:GTP binding"/>
    <property type="evidence" value="ECO:0007669"/>
    <property type="project" value="UniProtKB-UniRule"/>
</dbReference>
<dbReference type="GO" id="GO:0003924">
    <property type="term" value="F:GTPase activity"/>
    <property type="evidence" value="ECO:0007669"/>
    <property type="project" value="UniProtKB-UniRule"/>
</dbReference>
<dbReference type="GO" id="GO:0000287">
    <property type="term" value="F:magnesium ion binding"/>
    <property type="evidence" value="ECO:0007669"/>
    <property type="project" value="InterPro"/>
</dbReference>
<dbReference type="GO" id="GO:0042254">
    <property type="term" value="P:ribosome biogenesis"/>
    <property type="evidence" value="ECO:0007669"/>
    <property type="project" value="UniProtKB-UniRule"/>
</dbReference>
<dbReference type="CDD" id="cd01898">
    <property type="entry name" value="Obg"/>
    <property type="match status" value="1"/>
</dbReference>
<dbReference type="FunFam" id="2.70.210.12:FF:000001">
    <property type="entry name" value="GTPase Obg"/>
    <property type="match status" value="1"/>
</dbReference>
<dbReference type="Gene3D" id="2.70.210.12">
    <property type="entry name" value="GTP1/OBG domain"/>
    <property type="match status" value="1"/>
</dbReference>
<dbReference type="Gene3D" id="3.40.50.300">
    <property type="entry name" value="P-loop containing nucleotide triphosphate hydrolases"/>
    <property type="match status" value="1"/>
</dbReference>
<dbReference type="HAMAP" id="MF_01454">
    <property type="entry name" value="GTPase_Obg"/>
    <property type="match status" value="1"/>
</dbReference>
<dbReference type="InterPro" id="IPR031167">
    <property type="entry name" value="G_OBG"/>
</dbReference>
<dbReference type="InterPro" id="IPR006073">
    <property type="entry name" value="GTP-bd"/>
</dbReference>
<dbReference type="InterPro" id="IPR014100">
    <property type="entry name" value="GTP-bd_Obg/CgtA"/>
</dbReference>
<dbReference type="InterPro" id="IPR006074">
    <property type="entry name" value="GTP1-OBG_CS"/>
</dbReference>
<dbReference type="InterPro" id="IPR006169">
    <property type="entry name" value="GTP1_OBG_dom"/>
</dbReference>
<dbReference type="InterPro" id="IPR036726">
    <property type="entry name" value="GTP1_OBG_dom_sf"/>
</dbReference>
<dbReference type="InterPro" id="IPR045086">
    <property type="entry name" value="OBG_GTPase"/>
</dbReference>
<dbReference type="InterPro" id="IPR027417">
    <property type="entry name" value="P-loop_NTPase"/>
</dbReference>
<dbReference type="NCBIfam" id="TIGR02729">
    <property type="entry name" value="Obg_CgtA"/>
    <property type="match status" value="1"/>
</dbReference>
<dbReference type="NCBIfam" id="NF008955">
    <property type="entry name" value="PRK12297.1"/>
    <property type="match status" value="1"/>
</dbReference>
<dbReference type="NCBIfam" id="NF008956">
    <property type="entry name" value="PRK12299.1"/>
    <property type="match status" value="1"/>
</dbReference>
<dbReference type="PANTHER" id="PTHR11702">
    <property type="entry name" value="DEVELOPMENTALLY REGULATED GTP-BINDING PROTEIN-RELATED"/>
    <property type="match status" value="1"/>
</dbReference>
<dbReference type="PANTHER" id="PTHR11702:SF31">
    <property type="entry name" value="MITOCHONDRIAL RIBOSOME-ASSOCIATED GTPASE 2"/>
    <property type="match status" value="1"/>
</dbReference>
<dbReference type="Pfam" id="PF01018">
    <property type="entry name" value="GTP1_OBG"/>
    <property type="match status" value="1"/>
</dbReference>
<dbReference type="Pfam" id="PF01926">
    <property type="entry name" value="MMR_HSR1"/>
    <property type="match status" value="1"/>
</dbReference>
<dbReference type="PIRSF" id="PIRSF002401">
    <property type="entry name" value="GTP_bd_Obg/CgtA"/>
    <property type="match status" value="1"/>
</dbReference>
<dbReference type="PRINTS" id="PR00326">
    <property type="entry name" value="GTP1OBG"/>
</dbReference>
<dbReference type="SUPFAM" id="SSF82051">
    <property type="entry name" value="Obg GTP-binding protein N-terminal domain"/>
    <property type="match status" value="1"/>
</dbReference>
<dbReference type="SUPFAM" id="SSF52540">
    <property type="entry name" value="P-loop containing nucleoside triphosphate hydrolases"/>
    <property type="match status" value="1"/>
</dbReference>
<dbReference type="PROSITE" id="PS51710">
    <property type="entry name" value="G_OBG"/>
    <property type="match status" value="1"/>
</dbReference>
<dbReference type="PROSITE" id="PS00905">
    <property type="entry name" value="GTP1_OBG"/>
    <property type="match status" value="1"/>
</dbReference>
<dbReference type="PROSITE" id="PS51883">
    <property type="entry name" value="OBG"/>
    <property type="match status" value="1"/>
</dbReference>
<reference key="1">
    <citation type="journal article" date="2006" name="Nat. Biotechnol.">
        <title>Complete genome of the mutualistic, N2-fixing grass endophyte Azoarcus sp. strain BH72.</title>
        <authorList>
            <person name="Krause A."/>
            <person name="Ramakumar A."/>
            <person name="Bartels D."/>
            <person name="Battistoni F."/>
            <person name="Bekel T."/>
            <person name="Boch J."/>
            <person name="Boehm M."/>
            <person name="Friedrich F."/>
            <person name="Hurek T."/>
            <person name="Krause L."/>
            <person name="Linke B."/>
            <person name="McHardy A.C."/>
            <person name="Sarkar A."/>
            <person name="Schneiker S."/>
            <person name="Syed A.A."/>
            <person name="Thauer R."/>
            <person name="Vorhoelter F.-J."/>
            <person name="Weidner S."/>
            <person name="Puehler A."/>
            <person name="Reinhold-Hurek B."/>
            <person name="Kaiser O."/>
            <person name="Goesmann A."/>
        </authorList>
    </citation>
    <scope>NUCLEOTIDE SEQUENCE [LARGE SCALE GENOMIC DNA]</scope>
    <source>
        <strain>BH72</strain>
    </source>
</reference>
<protein>
    <recommendedName>
        <fullName evidence="1">GTPase Obg</fullName>
        <ecNumber evidence="1">3.6.5.-</ecNumber>
    </recommendedName>
    <alternativeName>
        <fullName evidence="1">GTP-binding protein Obg</fullName>
    </alternativeName>
</protein>
<accession>A1KAD0</accession>
<name>OBG_AZOSB</name>
<proteinExistence type="inferred from homology"/>
<comment type="function">
    <text evidence="1">An essential GTPase which binds GTP, GDP and possibly (p)ppGpp with moderate affinity, with high nucleotide exchange rates and a fairly low GTP hydrolysis rate. Plays a role in control of the cell cycle, stress response, ribosome biogenesis and in those bacteria that undergo differentiation, in morphogenesis control.</text>
</comment>
<comment type="cofactor">
    <cofactor evidence="1">
        <name>Mg(2+)</name>
        <dbReference type="ChEBI" id="CHEBI:18420"/>
    </cofactor>
</comment>
<comment type="subunit">
    <text evidence="1">Monomer.</text>
</comment>
<comment type="subcellular location">
    <subcellularLocation>
        <location evidence="1">Cytoplasm</location>
    </subcellularLocation>
</comment>
<comment type="similarity">
    <text evidence="1">Belongs to the TRAFAC class OBG-HflX-like GTPase superfamily. OBG GTPase family.</text>
</comment>
<gene>
    <name evidence="1" type="primary">obg</name>
    <name type="ordered locus">azo3169</name>
</gene>